<protein>
    <recommendedName>
        <fullName evidence="4">Three-finger toxin Mnn I</fullName>
    </recommendedName>
    <alternativeName>
        <fullName>Neurotoxin alpha</fullName>
    </alternativeName>
    <alternativeName>
        <fullName>Nicotinic acetylcholine receptor-binding protein Mnn-9</fullName>
    </alternativeName>
    <alternativeName>
        <fullName>Short neurotoxin 1</fullName>
    </alternativeName>
</protein>
<proteinExistence type="evidence at protein level"/>
<keyword id="KW-0008">Acetylcholine receptor inhibiting toxin</keyword>
<keyword id="KW-0903">Direct protein sequencing</keyword>
<keyword id="KW-1015">Disulfide bond</keyword>
<keyword id="KW-0872">Ion channel impairing toxin</keyword>
<keyword id="KW-0528">Neurotoxin</keyword>
<keyword id="KW-0629">Postsynaptic neurotoxin</keyword>
<keyword id="KW-0964">Secreted</keyword>
<keyword id="KW-0800">Toxin</keyword>
<organism>
    <name type="scientific">Micrurus nigrocinctus</name>
    <name type="common">Central American coral snake</name>
    <name type="synonym">Gargantilla</name>
    <dbReference type="NCBI Taxonomy" id="8635"/>
    <lineage>
        <taxon>Eukaryota</taxon>
        <taxon>Metazoa</taxon>
        <taxon>Chordata</taxon>
        <taxon>Craniata</taxon>
        <taxon>Vertebrata</taxon>
        <taxon>Euteleostomi</taxon>
        <taxon>Lepidosauria</taxon>
        <taxon>Squamata</taxon>
        <taxon>Bifurcata</taxon>
        <taxon>Unidentata</taxon>
        <taxon>Episquamata</taxon>
        <taxon>Toxicofera</taxon>
        <taxon>Serpentes</taxon>
        <taxon>Colubroidea</taxon>
        <taxon>Elapidae</taxon>
        <taxon>Elapinae</taxon>
        <taxon>Micrurus</taxon>
    </lineage>
</organism>
<accession>P80548</accession>
<accession>Q9PRQ5</accession>
<name>3S11_MICNI</name>
<comment type="function">
    <text evidence="2">Binds to muscle nicotinic acetylcholine receptor (nAChR) and inhibit acetylcholine from binding to the receptor, thereby impairing neuromuscular transmission.</text>
</comment>
<comment type="subcellular location">
    <subcellularLocation>
        <location evidence="3">Secreted</location>
    </subcellularLocation>
</comment>
<comment type="tissue specificity">
    <text evidence="5">Expressed by the venom gland.</text>
</comment>
<comment type="toxic dose">
    <text evidence="3">LD(50) is 65 ug/kg by intraperitoneal injection into mice (1.3 ug/mouse).</text>
</comment>
<comment type="similarity">
    <text evidence="5">Belongs to the three-finger toxin family. Short-chain subfamily. Type I alpha-neurotoxin sub-subfamily.</text>
</comment>
<feature type="chain" id="PRO_0000093590" description="Three-finger toxin Mnn I" evidence="3">
    <location>
        <begin position="1"/>
        <end position="60"/>
    </location>
</feature>
<feature type="disulfide bond" evidence="1">
    <location>
        <begin position="3"/>
        <end position="22"/>
    </location>
</feature>
<feature type="disulfide bond" evidence="1">
    <location>
        <begin position="17"/>
        <end position="39"/>
    </location>
</feature>
<feature type="disulfide bond" evidence="1">
    <location>
        <begin position="41"/>
        <end position="52"/>
    </location>
</feature>
<feature type="disulfide bond" evidence="1">
    <location>
        <begin position="53"/>
        <end position="58"/>
    </location>
</feature>
<feature type="sequence conflict" description="In Ref. 2; AA sequence." evidence="5" ref="2">
    <original>I</original>
    <variation>T</variation>
    <location>
        <position position="14"/>
    </location>
</feature>
<reference key="1">
    <citation type="journal article" date="1996" name="Eur. J. Biochem.">
        <title>Characterization of alpha-neurotoxin and phospholipase A2 activities from Micrurus venoms. Determination of the amino acid sequence and receptor-binding ability of the major alpha-neurotoxin from Micrurus nigrocinctus nigrocinctus.</title>
        <authorList>
            <person name="Rosso J.-P."/>
            <person name="Vargas-Rosso O."/>
            <person name="Gutierrez J.-M."/>
            <person name="Rochat H."/>
            <person name="Bougis P.E."/>
        </authorList>
    </citation>
    <scope>PROTEIN SEQUENCE</scope>
    <scope>TOXIC DOSE</scope>
    <scope>SUBCELLULAR LOCATION</scope>
    <source>
        <tissue>Venom</tissue>
    </source>
</reference>
<reference key="2">
    <citation type="journal article" date="1996" name="FEBS Lett.">
        <title>Characterization of multiple nicotinic acetylcholine receptor-binding proteins and phospholipases A2 from the venom of the coral snake Micrurus nigrocinctus.</title>
        <authorList>
            <person name="Alape-Giron A."/>
            <person name="Persson B."/>
            <person name="Cedelund E."/>
            <person name="Flores-Diaz M."/>
            <person name="Gutierrez J.-M."/>
            <person name="Thelestam M."/>
            <person name="Bergman T."/>
            <person name="Joernvall H."/>
        </authorList>
    </citation>
    <scope>PROTEIN SEQUENCE OF 1-26</scope>
    <source>
        <tissue>Venom</tissue>
    </source>
</reference>
<dbReference type="PIR" id="S68641">
    <property type="entry name" value="S68641"/>
</dbReference>
<dbReference type="PIR" id="S68769">
    <property type="entry name" value="S68769"/>
</dbReference>
<dbReference type="SMR" id="P80548"/>
<dbReference type="GO" id="GO:0005576">
    <property type="term" value="C:extracellular region"/>
    <property type="evidence" value="ECO:0007669"/>
    <property type="project" value="UniProtKB-SubCell"/>
</dbReference>
<dbReference type="GO" id="GO:0030550">
    <property type="term" value="F:acetylcholine receptor inhibitor activity"/>
    <property type="evidence" value="ECO:0007669"/>
    <property type="project" value="UniProtKB-KW"/>
</dbReference>
<dbReference type="GO" id="GO:0099106">
    <property type="term" value="F:ion channel regulator activity"/>
    <property type="evidence" value="ECO:0007669"/>
    <property type="project" value="UniProtKB-KW"/>
</dbReference>
<dbReference type="GO" id="GO:0090729">
    <property type="term" value="F:toxin activity"/>
    <property type="evidence" value="ECO:0007669"/>
    <property type="project" value="UniProtKB-KW"/>
</dbReference>
<dbReference type="CDD" id="cd00206">
    <property type="entry name" value="TFP_snake_toxin"/>
    <property type="match status" value="1"/>
</dbReference>
<dbReference type="FunFam" id="2.10.60.10:FF:000024">
    <property type="entry name" value="Cytotoxin 1"/>
    <property type="match status" value="1"/>
</dbReference>
<dbReference type="Gene3D" id="2.10.60.10">
    <property type="entry name" value="CD59"/>
    <property type="match status" value="1"/>
</dbReference>
<dbReference type="InterPro" id="IPR003571">
    <property type="entry name" value="Snake_3FTx"/>
</dbReference>
<dbReference type="InterPro" id="IPR045860">
    <property type="entry name" value="Snake_toxin-like_sf"/>
</dbReference>
<dbReference type="InterPro" id="IPR018354">
    <property type="entry name" value="Snake_toxin_con_site"/>
</dbReference>
<dbReference type="InterPro" id="IPR054131">
    <property type="entry name" value="Toxin_cobra-type"/>
</dbReference>
<dbReference type="Pfam" id="PF21947">
    <property type="entry name" value="Toxin_cobra-type"/>
    <property type="match status" value="1"/>
</dbReference>
<dbReference type="SUPFAM" id="SSF57302">
    <property type="entry name" value="Snake toxin-like"/>
    <property type="match status" value="1"/>
</dbReference>
<dbReference type="PROSITE" id="PS00272">
    <property type="entry name" value="SNAKE_TOXIN"/>
    <property type="match status" value="1"/>
</dbReference>
<sequence>MICHNQQSSQPPTIKTCSEGQCYKKTWRDHRGTISERGCGCPTVKPGIHISCCASDKCNA</sequence>
<evidence type="ECO:0000250" key="1">
    <source>
        <dbReference type="UniProtKB" id="P0C1Z0"/>
    </source>
</evidence>
<evidence type="ECO:0000250" key="2">
    <source>
        <dbReference type="UniProtKB" id="P60775"/>
    </source>
</evidence>
<evidence type="ECO:0000269" key="3">
    <source>
    </source>
</evidence>
<evidence type="ECO:0000303" key="4">
    <source>
    </source>
</evidence>
<evidence type="ECO:0000305" key="5"/>